<comment type="function">
    <text evidence="2 3">Involved in miRNAs and siRNAs biogenesis and thus promotes gene silencing (PubMed:23071326). Modulates auxin (IAA) transport-related developmental programs by regulating protein phosphatase 2A (PP2As)-driven auxin efflux carrier PIN proteins recycling and polarity (PubMed:26888284). Required during development (PubMed:23071326, PubMed:26888284). Necessary for abiotic stress (e.g. chilling and salt) tolerance (PubMed:23071326).</text>
</comment>
<comment type="subunit">
    <text evidence="3">Interacts with ubiquitin thioesterases UBP12 and UBP13, and with protein phosphatase 2A subunits PP2AB1, PP2AB2, PP2A3, PP2A4, PP2AA1 and PP2AA2.</text>
</comment>
<comment type="subcellular location">
    <subcellularLocation>
        <location evidence="2 3">Nucleus</location>
    </subcellularLocation>
    <subcellularLocation>
        <location evidence="3">Cytoplasm</location>
        <location evidence="3">Cytosol</location>
    </subcellularLocation>
    <text evidence="2 3">Colocalizes with miRNA biogenesis components in distinct subnuclear bodies (PubMed:23071326). Localized in the nuclei, excluding the nucleolus, in all cells of the root apical meristem. In young cortical cells of the root, localized in the nucleus and cytosol (PubMed:26888284).</text>
</comment>
<comment type="alternative products">
    <event type="alternative splicing"/>
    <isoform>
        <id>Q9SB47-1</id>
        <name>1</name>
        <sequence type="displayed"/>
    </isoform>
    <isoform>
        <id>Q9SB47-2</id>
        <name>2</name>
        <sequence type="described" ref="VSP_059075"/>
    </isoform>
</comment>
<comment type="tissue specificity">
    <text evidence="3">Expressed in the shoot apical meristem (SAM), embryos, seedlings, root tips, and root and leaf primordia.</text>
</comment>
<comment type="developmental stage">
    <text evidence="3">Localized in the shoot apical meristem (SAM) dome, the emerging leaf and root primordia, the provascular strands of developing seedlings, and the epidermis and cortex of the meristematic and elongation zones of the primary root tip, and in the protoderm of heart- and torpedo- stage embryos.</text>
</comment>
<comment type="disruption phenotype">
    <text evidence="2 3">Developmental defects due to abnormal miRNAs and siRNAs biogenesis including serrated, sickle-like leaf margin, reduced height, delayed flowering, and abnormal inflorescence phyllotaxy. Hypersensitivity to chilling and salt stresses (PubMed:23071326). Several symptoms associated with alteration in auxin (IAA) signaling such as increased IAA levels in shoot apices and reduced IAA accumulation in root meristems, reduced apical dominance and abnormal root gravitropism, growth and emergence. Altered PIN polarity and endocytosis in specific cells (PubMed:26888284).</text>
</comment>
<proteinExistence type="evidence at protein level"/>
<reference key="1">
    <citation type="journal article" date="1999" name="Nature">
        <title>Sequence and analysis of chromosome 4 of the plant Arabidopsis thaliana.</title>
        <authorList>
            <person name="Mayer K.F.X."/>
            <person name="Schueller C."/>
            <person name="Wambutt R."/>
            <person name="Murphy G."/>
            <person name="Volckaert G."/>
            <person name="Pohl T."/>
            <person name="Duesterhoeft A."/>
            <person name="Stiekema W."/>
            <person name="Entian K.-D."/>
            <person name="Terryn N."/>
            <person name="Harris B."/>
            <person name="Ansorge W."/>
            <person name="Brandt P."/>
            <person name="Grivell L.A."/>
            <person name="Rieger M."/>
            <person name="Weichselgartner M."/>
            <person name="de Simone V."/>
            <person name="Obermaier B."/>
            <person name="Mache R."/>
            <person name="Mueller M."/>
            <person name="Kreis M."/>
            <person name="Delseny M."/>
            <person name="Puigdomenech P."/>
            <person name="Watson M."/>
            <person name="Schmidtheini T."/>
            <person name="Reichert B."/>
            <person name="Portetelle D."/>
            <person name="Perez-Alonso M."/>
            <person name="Boutry M."/>
            <person name="Bancroft I."/>
            <person name="Vos P."/>
            <person name="Hoheisel J."/>
            <person name="Zimmermann W."/>
            <person name="Wedler H."/>
            <person name="Ridley P."/>
            <person name="Langham S.-A."/>
            <person name="McCullagh B."/>
            <person name="Bilham L."/>
            <person name="Robben J."/>
            <person name="van der Schueren J."/>
            <person name="Grymonprez B."/>
            <person name="Chuang Y.-J."/>
            <person name="Vandenbussche F."/>
            <person name="Braeken M."/>
            <person name="Weltjens I."/>
            <person name="Voet M."/>
            <person name="Bastiaens I."/>
            <person name="Aert R."/>
            <person name="Defoor E."/>
            <person name="Weitzenegger T."/>
            <person name="Bothe G."/>
            <person name="Ramsperger U."/>
            <person name="Hilbert H."/>
            <person name="Braun M."/>
            <person name="Holzer E."/>
            <person name="Brandt A."/>
            <person name="Peters S."/>
            <person name="van Staveren M."/>
            <person name="Dirkse W."/>
            <person name="Mooijman P."/>
            <person name="Klein Lankhorst R."/>
            <person name="Rose M."/>
            <person name="Hauf J."/>
            <person name="Koetter P."/>
            <person name="Berneiser S."/>
            <person name="Hempel S."/>
            <person name="Feldpausch M."/>
            <person name="Lamberth S."/>
            <person name="Van den Daele H."/>
            <person name="De Keyser A."/>
            <person name="Buysshaert C."/>
            <person name="Gielen J."/>
            <person name="Villarroel R."/>
            <person name="De Clercq R."/>
            <person name="van Montagu M."/>
            <person name="Rogers J."/>
            <person name="Cronin A."/>
            <person name="Quail M.A."/>
            <person name="Bray-Allen S."/>
            <person name="Clark L."/>
            <person name="Doggett J."/>
            <person name="Hall S."/>
            <person name="Kay M."/>
            <person name="Lennard N."/>
            <person name="McLay K."/>
            <person name="Mayes R."/>
            <person name="Pettett A."/>
            <person name="Rajandream M.A."/>
            <person name="Lyne M."/>
            <person name="Benes V."/>
            <person name="Rechmann S."/>
            <person name="Borkova D."/>
            <person name="Bloecker H."/>
            <person name="Scharfe M."/>
            <person name="Grimm M."/>
            <person name="Loehnert T.-H."/>
            <person name="Dose S."/>
            <person name="de Haan M."/>
            <person name="Maarse A.C."/>
            <person name="Schaefer M."/>
            <person name="Mueller-Auer S."/>
            <person name="Gabel C."/>
            <person name="Fuchs M."/>
            <person name="Fartmann B."/>
            <person name="Granderath K."/>
            <person name="Dauner D."/>
            <person name="Herzl A."/>
            <person name="Neumann S."/>
            <person name="Argiriou A."/>
            <person name="Vitale D."/>
            <person name="Liguori R."/>
            <person name="Piravandi E."/>
            <person name="Massenet O."/>
            <person name="Quigley F."/>
            <person name="Clabauld G."/>
            <person name="Muendlein A."/>
            <person name="Felber R."/>
            <person name="Schnabl S."/>
            <person name="Hiller R."/>
            <person name="Schmidt W."/>
            <person name="Lecharny A."/>
            <person name="Aubourg S."/>
            <person name="Chefdor F."/>
            <person name="Cooke R."/>
            <person name="Berger C."/>
            <person name="Monfort A."/>
            <person name="Casacuberta E."/>
            <person name="Gibbons T."/>
            <person name="Weber N."/>
            <person name="Vandenbol M."/>
            <person name="Bargues M."/>
            <person name="Terol J."/>
            <person name="Torres A."/>
            <person name="Perez-Perez A."/>
            <person name="Purnelle B."/>
            <person name="Bent E."/>
            <person name="Johnson S."/>
            <person name="Tacon D."/>
            <person name="Jesse T."/>
            <person name="Heijnen L."/>
            <person name="Schwarz S."/>
            <person name="Scholler P."/>
            <person name="Heber S."/>
            <person name="Francs P."/>
            <person name="Bielke C."/>
            <person name="Frishman D."/>
            <person name="Haase D."/>
            <person name="Lemcke K."/>
            <person name="Mewes H.-W."/>
            <person name="Stocker S."/>
            <person name="Zaccaria P."/>
            <person name="Bevan M."/>
            <person name="Wilson R.K."/>
            <person name="de la Bastide M."/>
            <person name="Habermann K."/>
            <person name="Parnell L."/>
            <person name="Dedhia N."/>
            <person name="Gnoj L."/>
            <person name="Schutz K."/>
            <person name="Huang E."/>
            <person name="Spiegel L."/>
            <person name="Sekhon M."/>
            <person name="Murray J."/>
            <person name="Sheet P."/>
            <person name="Cordes M."/>
            <person name="Abu-Threideh J."/>
            <person name="Stoneking T."/>
            <person name="Kalicki J."/>
            <person name="Graves T."/>
            <person name="Harmon G."/>
            <person name="Edwards J."/>
            <person name="Latreille P."/>
            <person name="Courtney L."/>
            <person name="Cloud J."/>
            <person name="Abbott A."/>
            <person name="Scott K."/>
            <person name="Johnson D."/>
            <person name="Minx P."/>
            <person name="Bentley D."/>
            <person name="Fulton B."/>
            <person name="Miller N."/>
            <person name="Greco T."/>
            <person name="Kemp K."/>
            <person name="Kramer J."/>
            <person name="Fulton L."/>
            <person name="Mardis E."/>
            <person name="Dante M."/>
            <person name="Pepin K."/>
            <person name="Hillier L.W."/>
            <person name="Nelson J."/>
            <person name="Spieth J."/>
            <person name="Ryan E."/>
            <person name="Andrews S."/>
            <person name="Geisel C."/>
            <person name="Layman D."/>
            <person name="Du H."/>
            <person name="Ali J."/>
            <person name="Berghoff A."/>
            <person name="Jones K."/>
            <person name="Drone K."/>
            <person name="Cotton M."/>
            <person name="Joshu C."/>
            <person name="Antonoiu B."/>
            <person name="Zidanic M."/>
            <person name="Strong C."/>
            <person name="Sun H."/>
            <person name="Lamar B."/>
            <person name="Yordan C."/>
            <person name="Ma P."/>
            <person name="Zhong J."/>
            <person name="Preston R."/>
            <person name="Vil D."/>
            <person name="Shekher M."/>
            <person name="Matero A."/>
            <person name="Shah R."/>
            <person name="Swaby I.K."/>
            <person name="O'Shaughnessy A."/>
            <person name="Rodriguez M."/>
            <person name="Hoffman J."/>
            <person name="Till S."/>
            <person name="Granat S."/>
            <person name="Shohdy N."/>
            <person name="Hasegawa A."/>
            <person name="Hameed A."/>
            <person name="Lodhi M."/>
            <person name="Johnson A."/>
            <person name="Chen E."/>
            <person name="Marra M.A."/>
            <person name="Martienssen R."/>
            <person name="McCombie W.R."/>
        </authorList>
    </citation>
    <scope>NUCLEOTIDE SEQUENCE [LARGE SCALE GENOMIC DNA]</scope>
    <source>
        <strain>cv. Columbia</strain>
    </source>
</reference>
<reference key="2">
    <citation type="journal article" date="2017" name="Plant J.">
        <title>Araport11: a complete reannotation of the Arabidopsis thaliana reference genome.</title>
        <authorList>
            <person name="Cheng C.Y."/>
            <person name="Krishnakumar V."/>
            <person name="Chan A.P."/>
            <person name="Thibaud-Nissen F."/>
            <person name="Schobel S."/>
            <person name="Town C.D."/>
        </authorList>
    </citation>
    <scope>GENOME REANNOTATION</scope>
    <source>
        <strain>cv. Columbia</strain>
    </source>
</reference>
<reference key="3">
    <citation type="journal article" date="2003" name="Science">
        <title>Empirical analysis of transcriptional activity in the Arabidopsis genome.</title>
        <authorList>
            <person name="Yamada K."/>
            <person name="Lim J."/>
            <person name="Dale J.M."/>
            <person name="Chen H."/>
            <person name="Shinn P."/>
            <person name="Palm C.J."/>
            <person name="Southwick A.M."/>
            <person name="Wu H.C."/>
            <person name="Kim C.J."/>
            <person name="Nguyen M."/>
            <person name="Pham P.K."/>
            <person name="Cheuk R.F."/>
            <person name="Karlin-Newmann G."/>
            <person name="Liu S.X."/>
            <person name="Lam B."/>
            <person name="Sakano H."/>
            <person name="Wu T."/>
            <person name="Yu G."/>
            <person name="Miranda M."/>
            <person name="Quach H.L."/>
            <person name="Tripp M."/>
            <person name="Chang C.H."/>
            <person name="Lee J.M."/>
            <person name="Toriumi M.J."/>
            <person name="Chan M.M."/>
            <person name="Tang C.C."/>
            <person name="Onodera C.S."/>
            <person name="Deng J.M."/>
            <person name="Akiyama K."/>
            <person name="Ansari Y."/>
            <person name="Arakawa T."/>
            <person name="Banh J."/>
            <person name="Banno F."/>
            <person name="Bowser L."/>
            <person name="Brooks S.Y."/>
            <person name="Carninci P."/>
            <person name="Chao Q."/>
            <person name="Choy N."/>
            <person name="Enju A."/>
            <person name="Goldsmith A.D."/>
            <person name="Gurjal M."/>
            <person name="Hansen N.F."/>
            <person name="Hayashizaki Y."/>
            <person name="Johnson-Hopson C."/>
            <person name="Hsuan V.W."/>
            <person name="Iida K."/>
            <person name="Karnes M."/>
            <person name="Khan S."/>
            <person name="Koesema E."/>
            <person name="Ishida J."/>
            <person name="Jiang P.X."/>
            <person name="Jones T."/>
            <person name="Kawai J."/>
            <person name="Kamiya A."/>
            <person name="Meyers C."/>
            <person name="Nakajima M."/>
            <person name="Narusaka M."/>
            <person name="Seki M."/>
            <person name="Sakurai T."/>
            <person name="Satou M."/>
            <person name="Tamse R."/>
            <person name="Vaysberg M."/>
            <person name="Wallender E.K."/>
            <person name="Wong C."/>
            <person name="Yamamura Y."/>
            <person name="Yuan S."/>
            <person name="Shinozaki K."/>
            <person name="Davis R.W."/>
            <person name="Theologis A."/>
            <person name="Ecker J.R."/>
        </authorList>
    </citation>
    <scope>NUCLEOTIDE SEQUENCE [LARGE SCALE MRNA] (ISOFORMS 1 AND 2)</scope>
    <source>
        <strain>cv. Columbia</strain>
    </source>
</reference>
<reference key="4">
    <citation type="journal article" date="2012" name="Proc. Natl. Acad. Sci. U.S.A.">
        <title>Arabidopsis proline-rich protein important for development and abiotic stress tolerance is involved in microRNA biogenesis.</title>
        <authorList>
            <person name="Zhan X."/>
            <person name="Wang B."/>
            <person name="Li H."/>
            <person name="Liu R."/>
            <person name="Kalia R.K."/>
            <person name="Zhu J.-K."/>
            <person name="Chinnusamy V."/>
        </authorList>
    </citation>
    <scope>FUNCTION</scope>
    <scope>DISRUPTION PHENOTYPE</scope>
    <scope>SUBCELLULAR LOCATION</scope>
    <source>
        <strain>cv. Columbia</strain>
    </source>
</reference>
<reference key="5">
    <citation type="journal article" date="2016" name="Proc. Natl. Acad. Sci. U.S.A.">
        <title>ROTUNDA3 function in plant development by phosphatase 2A-mediated regulation of auxin transporter recycling.</title>
        <authorList>
            <person name="Karampelias M."/>
            <person name="Neyt P."/>
            <person name="De Groeve S."/>
            <person name="Aesaert S."/>
            <person name="Coussens G."/>
            <person name="Rolcik J."/>
            <person name="Bruno L."/>
            <person name="De Winne N."/>
            <person name="Van Minnebruggen A."/>
            <person name="Van Montagu M."/>
            <person name="Ponce M.R."/>
            <person name="Micol J.L."/>
            <person name="Friml J."/>
            <person name="De Jaeger G."/>
            <person name="Van Lijsebettens M."/>
        </authorList>
    </citation>
    <scope>FUNCTION</scope>
    <scope>DISRUPTION PHENOTYPE</scope>
    <scope>TISSUE SPECIFICITY</scope>
    <scope>DEVELOPMENTAL STAGE</scope>
    <scope>SUBCELLULAR LOCATION</scope>
    <scope>INTERACTION WITH UBP12; UBP13; PP2AB1; PP2AB2; PP2A3; PP2A4; PP2AA1 AND PP2AA2</scope>
    <source>
        <strain>cv. Columbia</strain>
        <strain>cv. Landsberg erecta</strain>
    </source>
</reference>
<evidence type="ECO:0000256" key="1">
    <source>
        <dbReference type="SAM" id="MobiDB-lite"/>
    </source>
</evidence>
<evidence type="ECO:0000269" key="2">
    <source>
    </source>
</evidence>
<evidence type="ECO:0000269" key="3">
    <source>
    </source>
</evidence>
<evidence type="ECO:0000303" key="4">
    <source>
    </source>
</evidence>
<evidence type="ECO:0000303" key="5">
    <source>
    </source>
</evidence>
<evidence type="ECO:0000305" key="6"/>
<evidence type="ECO:0000312" key="7">
    <source>
        <dbReference type="Araport" id="AT4G24500"/>
    </source>
</evidence>
<evidence type="ECO:0000312" key="8">
    <source>
        <dbReference type="EMBL" id="CAA23013.1"/>
    </source>
</evidence>
<sequence>MEDSEKRKQMLKAMRMEAAAQNDDDATTGTETSMSTGHLSNPLAETSNHQQDSFETQRFDYYTDPMAAYSSFKKNKTPKQQYISSPSHQGSSPVPPQFPPSVPPGSLCSEYQAQTNHGGFHAAHYEPRGMAHLSPSHRGPPAGWNNNFRPPPVNHSGPPQWVPRPFPFSQEMPNMGNNRFGGRGSYNNTPPQFSNYGRQNANWGGNTYPNSGRGRSRGRGMNTSFGRDGGRRPMEPGAERFYSNSMAEDPWKHLKPVLWKNCSDASSSSSTGQAWLPKSIAPKKSVTSEATHKTSSNQQSLAEYLAASLDGATCDESSN</sequence>
<dbReference type="EMBL" id="AL035356">
    <property type="protein sequence ID" value="CAA23013.1"/>
    <property type="molecule type" value="Genomic_DNA"/>
</dbReference>
<dbReference type="EMBL" id="AL161561">
    <property type="protein sequence ID" value="CAB79360.1"/>
    <property type="molecule type" value="Genomic_DNA"/>
</dbReference>
<dbReference type="EMBL" id="CP002687">
    <property type="protein sequence ID" value="AEE84915.1"/>
    <property type="molecule type" value="Genomic_DNA"/>
</dbReference>
<dbReference type="EMBL" id="CP002687">
    <property type="protein sequence ID" value="AEE84916.1"/>
    <property type="molecule type" value="Genomic_DNA"/>
</dbReference>
<dbReference type="EMBL" id="CP002687">
    <property type="protein sequence ID" value="AEE84917.1"/>
    <property type="molecule type" value="Genomic_DNA"/>
</dbReference>
<dbReference type="EMBL" id="AY046010">
    <property type="protein sequence ID" value="AAK76684.1"/>
    <property type="molecule type" value="mRNA"/>
</dbReference>
<dbReference type="EMBL" id="AY142488">
    <property type="protein sequence ID" value="AAN13039.1"/>
    <property type="molecule type" value="mRNA"/>
</dbReference>
<dbReference type="EMBL" id="BT001099">
    <property type="protein sequence ID" value="AAN64163.1"/>
    <property type="molecule type" value="mRNA"/>
</dbReference>
<dbReference type="PIR" id="T05584">
    <property type="entry name" value="T05584"/>
</dbReference>
<dbReference type="RefSeq" id="NP_001190822.1">
    <molecule id="Q9SB47-1"/>
    <property type="nucleotide sequence ID" value="NM_001203893.1"/>
</dbReference>
<dbReference type="RefSeq" id="NP_001320056.1">
    <molecule id="Q9SB47-2"/>
    <property type="nucleotide sequence ID" value="NM_001341679.1"/>
</dbReference>
<dbReference type="RefSeq" id="NP_567704.1">
    <molecule id="Q9SB47-1"/>
    <property type="nucleotide sequence ID" value="NM_118583.4"/>
</dbReference>
<dbReference type="FunCoup" id="Q9SB47">
    <property type="interactions" value="2069"/>
</dbReference>
<dbReference type="IntAct" id="Q9SB47">
    <property type="interactions" value="3"/>
</dbReference>
<dbReference type="STRING" id="3702.Q9SB47"/>
<dbReference type="PaxDb" id="3702-AT4G24500.3"/>
<dbReference type="ProteomicsDB" id="232634">
    <molecule id="Q9SB47-1"/>
</dbReference>
<dbReference type="EnsemblPlants" id="AT4G24500.1">
    <molecule id="Q9SB47-1"/>
    <property type="protein sequence ID" value="AT4G24500.1"/>
    <property type="gene ID" value="AT4G24500"/>
</dbReference>
<dbReference type="EnsemblPlants" id="AT4G24500.2">
    <molecule id="Q9SB47-2"/>
    <property type="protein sequence ID" value="AT4G24500.2"/>
    <property type="gene ID" value="AT4G24500"/>
</dbReference>
<dbReference type="EnsemblPlants" id="AT4G24500.3">
    <molecule id="Q9SB47-1"/>
    <property type="protein sequence ID" value="AT4G24500.3"/>
    <property type="gene ID" value="AT4G24500"/>
</dbReference>
<dbReference type="GeneID" id="828552"/>
<dbReference type="Gramene" id="AT4G24500.1">
    <molecule id="Q9SB47-1"/>
    <property type="protein sequence ID" value="AT4G24500.1"/>
    <property type="gene ID" value="AT4G24500"/>
</dbReference>
<dbReference type="Gramene" id="AT4G24500.2">
    <molecule id="Q9SB47-2"/>
    <property type="protein sequence ID" value="AT4G24500.2"/>
    <property type="gene ID" value="AT4G24500"/>
</dbReference>
<dbReference type="Gramene" id="AT4G24500.3">
    <molecule id="Q9SB47-1"/>
    <property type="protein sequence ID" value="AT4G24500.3"/>
    <property type="gene ID" value="AT4G24500"/>
</dbReference>
<dbReference type="KEGG" id="ath:AT4G24500"/>
<dbReference type="Araport" id="AT4G24500"/>
<dbReference type="TAIR" id="AT4G24500">
    <property type="gene designation" value="SIC"/>
</dbReference>
<dbReference type="eggNOG" id="ENOG502RYUD">
    <property type="taxonomic scope" value="Eukaryota"/>
</dbReference>
<dbReference type="HOGENOM" id="CLU_800261_0_0_1"/>
<dbReference type="InParanoid" id="Q9SB47"/>
<dbReference type="OMA" id="PICTPRG"/>
<dbReference type="PhylomeDB" id="Q9SB47"/>
<dbReference type="PRO" id="PR:Q9SB47"/>
<dbReference type="Proteomes" id="UP000006548">
    <property type="component" value="Chromosome 4"/>
</dbReference>
<dbReference type="ExpressionAtlas" id="Q9SB47">
    <property type="expression patterns" value="baseline and differential"/>
</dbReference>
<dbReference type="GO" id="GO:0005829">
    <property type="term" value="C:cytosol"/>
    <property type="evidence" value="ECO:0000314"/>
    <property type="project" value="TAIR"/>
</dbReference>
<dbReference type="GO" id="GO:0016604">
    <property type="term" value="C:nuclear body"/>
    <property type="evidence" value="ECO:0000314"/>
    <property type="project" value="TAIR"/>
</dbReference>
<dbReference type="GO" id="GO:0005634">
    <property type="term" value="C:nucleus"/>
    <property type="evidence" value="ECO:0000314"/>
    <property type="project" value="TAIR"/>
</dbReference>
<dbReference type="GO" id="GO:0005886">
    <property type="term" value="C:plasma membrane"/>
    <property type="evidence" value="ECO:0000314"/>
    <property type="project" value="TAIR"/>
</dbReference>
<dbReference type="GO" id="GO:0000380">
    <property type="term" value="P:alternative mRNA splicing, via spliceosome"/>
    <property type="evidence" value="ECO:0000315"/>
    <property type="project" value="TAIR"/>
</dbReference>
<dbReference type="GO" id="GO:0009734">
    <property type="term" value="P:auxin-activated signaling pathway"/>
    <property type="evidence" value="ECO:0007669"/>
    <property type="project" value="UniProtKB-KW"/>
</dbReference>
<dbReference type="GO" id="GO:0007623">
    <property type="term" value="P:circadian rhythm"/>
    <property type="evidence" value="ECO:0000315"/>
    <property type="project" value="TAIR"/>
</dbReference>
<dbReference type="GO" id="GO:0009649">
    <property type="term" value="P:entrainment of circadian clock"/>
    <property type="evidence" value="ECO:0000315"/>
    <property type="project" value="TAIR"/>
</dbReference>
<dbReference type="GO" id="GO:0035196">
    <property type="term" value="P:miRNA processing"/>
    <property type="evidence" value="ECO:0000315"/>
    <property type="project" value="TAIR"/>
</dbReference>
<dbReference type="GO" id="GO:0000398">
    <property type="term" value="P:mRNA splicing, via spliceosome"/>
    <property type="evidence" value="ECO:0000315"/>
    <property type="project" value="TAIR"/>
</dbReference>
<dbReference type="GO" id="GO:1901703">
    <property type="term" value="P:protein localization involved in auxin polar transport"/>
    <property type="evidence" value="ECO:0000316"/>
    <property type="project" value="TAIR"/>
</dbReference>
<dbReference type="GO" id="GO:0000381">
    <property type="term" value="P:regulation of alternative mRNA splicing, via spliceosome"/>
    <property type="evidence" value="ECO:0000315"/>
    <property type="project" value="TAIR"/>
</dbReference>
<dbReference type="GO" id="GO:2000012">
    <property type="term" value="P:regulation of auxin polar transport"/>
    <property type="evidence" value="ECO:0000316"/>
    <property type="project" value="TAIR"/>
</dbReference>
<dbReference type="GO" id="GO:0009409">
    <property type="term" value="P:response to cold"/>
    <property type="evidence" value="ECO:0000315"/>
    <property type="project" value="TAIR"/>
</dbReference>
<dbReference type="GO" id="GO:0009651">
    <property type="term" value="P:response to salt stress"/>
    <property type="evidence" value="ECO:0000315"/>
    <property type="project" value="TAIR"/>
</dbReference>
<dbReference type="GO" id="GO:0030422">
    <property type="term" value="P:siRNA processing"/>
    <property type="evidence" value="ECO:0000315"/>
    <property type="project" value="UniProtKB"/>
</dbReference>
<dbReference type="InterPro" id="IPR039292">
    <property type="entry name" value="SICKLE"/>
</dbReference>
<dbReference type="PANTHER" id="PTHR36054">
    <property type="entry name" value="PROTEIN SICKLE"/>
    <property type="match status" value="1"/>
</dbReference>
<dbReference type="PANTHER" id="PTHR36054:SF2">
    <property type="entry name" value="PROTEIN SICKLE"/>
    <property type="match status" value="1"/>
</dbReference>
<accession>Q9SB47</accession>
<accession>Q8H0Z3</accession>
<accession>Q94AJ0</accession>
<feature type="chain" id="PRO_0000441628" description="Protein SICKLE">
    <location>
        <begin position="1"/>
        <end position="319"/>
    </location>
</feature>
<feature type="region of interest" description="Disordered" evidence="1">
    <location>
        <begin position="1"/>
        <end position="59"/>
    </location>
</feature>
<feature type="region of interest" description="Disordered" evidence="1">
    <location>
        <begin position="71"/>
        <end position="239"/>
    </location>
</feature>
<feature type="region of interest" description="Disordered" evidence="1">
    <location>
        <begin position="262"/>
        <end position="299"/>
    </location>
</feature>
<feature type="compositionally biased region" description="Polar residues" evidence="1">
    <location>
        <begin position="27"/>
        <end position="56"/>
    </location>
</feature>
<feature type="compositionally biased region" description="Polar residues" evidence="1">
    <location>
        <begin position="78"/>
        <end position="88"/>
    </location>
</feature>
<feature type="compositionally biased region" description="Pro residues" evidence="1">
    <location>
        <begin position="93"/>
        <end position="103"/>
    </location>
</feature>
<feature type="compositionally biased region" description="Polar residues" evidence="1">
    <location>
        <begin position="185"/>
        <end position="210"/>
    </location>
</feature>
<feature type="compositionally biased region" description="Basic and acidic residues" evidence="1">
    <location>
        <begin position="228"/>
        <end position="238"/>
    </location>
</feature>
<feature type="compositionally biased region" description="Polar residues" evidence="1">
    <location>
        <begin position="285"/>
        <end position="299"/>
    </location>
</feature>
<feature type="splice variant" id="VSP_059075" description="In isoform 2.">
    <location>
        <begin position="58"/>
        <end position="86"/>
    </location>
</feature>
<feature type="sequence conflict" description="In Ref. 3; AAK76684." evidence="6" ref="3">
    <original>Y</original>
    <variation>H</variation>
    <location>
        <position position="208"/>
    </location>
</feature>
<name>SIC_ARATH</name>
<organism>
    <name type="scientific">Arabidopsis thaliana</name>
    <name type="common">Mouse-ear cress</name>
    <dbReference type="NCBI Taxonomy" id="3702"/>
    <lineage>
        <taxon>Eukaryota</taxon>
        <taxon>Viridiplantae</taxon>
        <taxon>Streptophyta</taxon>
        <taxon>Embryophyta</taxon>
        <taxon>Tracheophyta</taxon>
        <taxon>Spermatophyta</taxon>
        <taxon>Magnoliopsida</taxon>
        <taxon>eudicotyledons</taxon>
        <taxon>Gunneridae</taxon>
        <taxon>Pentapetalae</taxon>
        <taxon>rosids</taxon>
        <taxon>malvids</taxon>
        <taxon>Brassicales</taxon>
        <taxon>Brassicaceae</taxon>
        <taxon>Camelineae</taxon>
        <taxon>Arabidopsis</taxon>
    </lineage>
</organism>
<keyword id="KW-0025">Alternative splicing</keyword>
<keyword id="KW-0927">Auxin signaling pathway</keyword>
<keyword id="KW-0963">Cytoplasm</keyword>
<keyword id="KW-0217">Developmental protein</keyword>
<keyword id="KW-0539">Nucleus</keyword>
<keyword id="KW-1185">Reference proteome</keyword>
<keyword id="KW-0943">RNA-mediated gene silencing</keyword>
<keyword id="KW-0346">Stress response</keyword>
<protein>
    <recommendedName>
        <fullName evidence="4">Protein SICKLE</fullName>
    </recommendedName>
    <alternativeName>
        <fullName evidence="5">Protein ROTUNDA 3</fullName>
    </alternativeName>
</protein>
<gene>
    <name evidence="4" type="primary">SIC</name>
    <name evidence="5" type="synonym">RON3</name>
    <name evidence="7" type="ordered locus">At4g24500</name>
    <name evidence="8" type="ORF">F22K18.300</name>
</gene>